<feature type="chain" id="PRO_1000145521" description="Glutathione-regulated potassium-efflux system protein KefB">
    <location>
        <begin position="1"/>
        <end position="601"/>
    </location>
</feature>
<feature type="transmembrane region" description="Helical" evidence="1">
    <location>
        <begin position="4"/>
        <end position="24"/>
    </location>
</feature>
<feature type="transmembrane region" description="Helical" evidence="1">
    <location>
        <begin position="29"/>
        <end position="49"/>
    </location>
</feature>
<feature type="transmembrane region" description="Helical" evidence="1">
    <location>
        <begin position="55"/>
        <end position="75"/>
    </location>
</feature>
<feature type="transmembrane region" description="Helical" evidence="1">
    <location>
        <begin position="87"/>
        <end position="107"/>
    </location>
</feature>
<feature type="transmembrane region" description="Helical" evidence="1">
    <location>
        <begin position="115"/>
        <end position="135"/>
    </location>
</feature>
<feature type="transmembrane region" description="Helical" evidence="1">
    <location>
        <begin position="152"/>
        <end position="172"/>
    </location>
</feature>
<feature type="transmembrane region" description="Helical" evidence="1">
    <location>
        <begin position="177"/>
        <end position="197"/>
    </location>
</feature>
<feature type="transmembrane region" description="Helical" evidence="1">
    <location>
        <begin position="207"/>
        <end position="227"/>
    </location>
</feature>
<feature type="transmembrane region" description="Helical" evidence="1">
    <location>
        <begin position="230"/>
        <end position="250"/>
    </location>
</feature>
<feature type="transmembrane region" description="Helical" evidence="1">
    <location>
        <begin position="268"/>
        <end position="288"/>
    </location>
</feature>
<feature type="transmembrane region" description="Helical" evidence="1">
    <location>
        <begin position="291"/>
        <end position="311"/>
    </location>
</feature>
<feature type="transmembrane region" description="Helical" evidence="1">
    <location>
        <begin position="324"/>
        <end position="344"/>
    </location>
</feature>
<feature type="transmembrane region" description="Helical" evidence="1">
    <location>
        <begin position="356"/>
        <end position="376"/>
    </location>
</feature>
<feature type="domain" description="RCK N-terminal" evidence="2">
    <location>
        <begin position="400"/>
        <end position="519"/>
    </location>
</feature>
<name>KEFB_ECOSM</name>
<sequence>MEGSDFLLAGVLFLFAAVAAVPLASRLGIGAVLGYLLAGIAIGPWGLGFISDVDEILHFSELGVVFLMFIIGLELNPSKLWQLRRSIFGVGAAQVLLSAALLAGLLMLTHFSWQAAVVGGIGLAMSSTAMALQLMRDKRMNRSESGQLGFSVLLFQDLAVIPALALVPLLAGSADEHFDWMKIGMKVLAFVGMLIGGRYLLRPVFRFIAASGVREVFTAATLLLVLGSALFMDALGLSMALGTFIAGVLLAESEYRHELETAIDPFKGLLLGLFFISVGMSLNLGVLYTHLLWVVISVVVLVAVKILVLYLLARLYGVRSSERMQFAGVLSQGGEFAFVLFSTASSQRLFQGDQMALLLVTVTLSMMTTPLLMKLVDKWLSRQFNGPEEEDEKPWVNDDKPQVIVVGFGRFGQVIGRLLMANKMRITVLERDISAVNLMRKYGYKVYYGDATQVDLLRSAGAEAAESIVITCNEPEDTMKLVEICQQHFPHLHILARARGRVEAHELLQAGVTQFSRETFSSALELGRKTLVTLGMHPHQAQRAQLHFRRLDMRMLRELIPMHADTVQISRAREARRELEEIFQREMQQERRQLDGWDEFE</sequence>
<reference key="1">
    <citation type="journal article" date="2008" name="J. Bacteriol.">
        <title>Insights into the environmental resistance gene pool from the genome sequence of the multidrug-resistant environmental isolate Escherichia coli SMS-3-5.</title>
        <authorList>
            <person name="Fricke W.F."/>
            <person name="Wright M.S."/>
            <person name="Lindell A.H."/>
            <person name="Harkins D.M."/>
            <person name="Baker-Austin C."/>
            <person name="Ravel J."/>
            <person name="Stepanauskas R."/>
        </authorList>
    </citation>
    <scope>NUCLEOTIDE SEQUENCE [LARGE SCALE GENOMIC DNA]</scope>
    <source>
        <strain>SMS-3-5 / SECEC</strain>
    </source>
</reference>
<evidence type="ECO:0000255" key="1">
    <source>
        <dbReference type="HAMAP-Rule" id="MF_01412"/>
    </source>
</evidence>
<evidence type="ECO:0000255" key="2">
    <source>
        <dbReference type="PROSITE-ProRule" id="PRU00543"/>
    </source>
</evidence>
<protein>
    <recommendedName>
        <fullName evidence="1">Glutathione-regulated potassium-efflux system protein KefB</fullName>
    </recommendedName>
    <alternativeName>
        <fullName evidence="1">K(+)/H(+) antiporter</fullName>
    </alternativeName>
</protein>
<gene>
    <name evidence="1" type="primary">kefB</name>
    <name type="ordered locus">EcSMS35_3632</name>
</gene>
<keyword id="KW-0050">Antiport</keyword>
<keyword id="KW-0997">Cell inner membrane</keyword>
<keyword id="KW-1003">Cell membrane</keyword>
<keyword id="KW-0406">Ion transport</keyword>
<keyword id="KW-0472">Membrane</keyword>
<keyword id="KW-0630">Potassium</keyword>
<keyword id="KW-0633">Potassium transport</keyword>
<keyword id="KW-0812">Transmembrane</keyword>
<keyword id="KW-1133">Transmembrane helix</keyword>
<keyword id="KW-0813">Transport</keyword>
<organism>
    <name type="scientific">Escherichia coli (strain SMS-3-5 / SECEC)</name>
    <dbReference type="NCBI Taxonomy" id="439855"/>
    <lineage>
        <taxon>Bacteria</taxon>
        <taxon>Pseudomonadati</taxon>
        <taxon>Pseudomonadota</taxon>
        <taxon>Gammaproteobacteria</taxon>
        <taxon>Enterobacterales</taxon>
        <taxon>Enterobacteriaceae</taxon>
        <taxon>Escherichia</taxon>
    </lineage>
</organism>
<accession>B1LHF1</accession>
<dbReference type="EMBL" id="CP000970">
    <property type="protein sequence ID" value="ACB18109.1"/>
    <property type="molecule type" value="Genomic_DNA"/>
</dbReference>
<dbReference type="RefSeq" id="WP_000399156.1">
    <property type="nucleotide sequence ID" value="NC_010498.1"/>
</dbReference>
<dbReference type="SMR" id="B1LHF1"/>
<dbReference type="KEGG" id="ecm:EcSMS35_3632"/>
<dbReference type="HOGENOM" id="CLU_005126_9_3_6"/>
<dbReference type="Proteomes" id="UP000007011">
    <property type="component" value="Chromosome"/>
</dbReference>
<dbReference type="GO" id="GO:0005886">
    <property type="term" value="C:plasma membrane"/>
    <property type="evidence" value="ECO:0007669"/>
    <property type="project" value="UniProtKB-SubCell"/>
</dbReference>
<dbReference type="GO" id="GO:0015503">
    <property type="term" value="F:glutathione-regulated potassium exporter activity"/>
    <property type="evidence" value="ECO:0007669"/>
    <property type="project" value="UniProtKB-UniRule"/>
</dbReference>
<dbReference type="GO" id="GO:1902600">
    <property type="term" value="P:proton transmembrane transport"/>
    <property type="evidence" value="ECO:0007669"/>
    <property type="project" value="InterPro"/>
</dbReference>
<dbReference type="FunFam" id="1.20.1530.20:FF:000001">
    <property type="entry name" value="Glutathione-regulated potassium-efflux system protein KefB"/>
    <property type="match status" value="1"/>
</dbReference>
<dbReference type="FunFam" id="3.40.50.720:FF:000036">
    <property type="entry name" value="Glutathione-regulated potassium-efflux system protein KefB"/>
    <property type="match status" value="1"/>
</dbReference>
<dbReference type="Gene3D" id="1.20.1530.20">
    <property type="match status" value="1"/>
</dbReference>
<dbReference type="Gene3D" id="3.40.50.720">
    <property type="entry name" value="NAD(P)-binding Rossmann-like Domain"/>
    <property type="match status" value="1"/>
</dbReference>
<dbReference type="HAMAP" id="MF_01412">
    <property type="entry name" value="K_H_efflux_KefB"/>
    <property type="match status" value="1"/>
</dbReference>
<dbReference type="InterPro" id="IPR006153">
    <property type="entry name" value="Cation/H_exchanger_TM"/>
</dbReference>
<dbReference type="InterPro" id="IPR004771">
    <property type="entry name" value="K/H_exchanger"/>
</dbReference>
<dbReference type="InterPro" id="IPR020884">
    <property type="entry name" value="K_H_efflux_KefB"/>
</dbReference>
<dbReference type="InterPro" id="IPR038770">
    <property type="entry name" value="Na+/solute_symporter_sf"/>
</dbReference>
<dbReference type="InterPro" id="IPR036291">
    <property type="entry name" value="NAD(P)-bd_dom_sf"/>
</dbReference>
<dbReference type="InterPro" id="IPR003148">
    <property type="entry name" value="RCK_N"/>
</dbReference>
<dbReference type="NCBIfam" id="TIGR00932">
    <property type="entry name" value="2a37"/>
    <property type="match status" value="1"/>
</dbReference>
<dbReference type="NCBIfam" id="NF002973">
    <property type="entry name" value="PRK03659.1"/>
    <property type="match status" value="1"/>
</dbReference>
<dbReference type="PANTHER" id="PTHR46157">
    <property type="entry name" value="K(+) EFFLUX ANTIPORTER 3, CHLOROPLASTIC"/>
    <property type="match status" value="1"/>
</dbReference>
<dbReference type="PANTHER" id="PTHR46157:SF4">
    <property type="entry name" value="K(+) EFFLUX ANTIPORTER 3, CHLOROPLASTIC"/>
    <property type="match status" value="1"/>
</dbReference>
<dbReference type="Pfam" id="PF00999">
    <property type="entry name" value="Na_H_Exchanger"/>
    <property type="match status" value="1"/>
</dbReference>
<dbReference type="Pfam" id="PF02254">
    <property type="entry name" value="TrkA_N"/>
    <property type="match status" value="1"/>
</dbReference>
<dbReference type="SUPFAM" id="SSF51735">
    <property type="entry name" value="NAD(P)-binding Rossmann-fold domains"/>
    <property type="match status" value="1"/>
</dbReference>
<dbReference type="PROSITE" id="PS51201">
    <property type="entry name" value="RCK_N"/>
    <property type="match status" value="1"/>
</dbReference>
<proteinExistence type="inferred from homology"/>
<comment type="function">
    <text evidence="1">Pore-forming subunit of a potassium efflux system that confers protection against electrophiles. Catalyzes K(+)/H(+) antiport.</text>
</comment>
<comment type="subunit">
    <text evidence="1">Interacts with the regulatory subunit KefG.</text>
</comment>
<comment type="subcellular location">
    <subcellularLocation>
        <location evidence="1">Cell inner membrane</location>
        <topology evidence="1">Multi-pass membrane protein</topology>
    </subcellularLocation>
</comment>
<comment type="similarity">
    <text evidence="1">Belongs to the monovalent cation:proton antiporter 2 (CPA2) transporter (TC 2.A.37) family. KefB subfamily.</text>
</comment>